<sequence>MDIFREIASSMKGKNVFISPASISSVLTILYYGANGSTAEQLSKYVEKEENMDKVSAQNISFKSMNKVYGRYSAVFKDSFLGKIGDKFQTVDFTDCRTIDAINKCVDIFTEGKINPLLDEPLSPDTCLLAISAVYFKAKWLMPFEKEFTSDYPFYVSPTEMVDVSMMSIYGEPFNHASVKESFGNFSIIELPYVGDTSMMVILPNKIDGLESIEQNLTDTNFKKWCNSLKATFIDVHIPKFKVIGSYNLVDTLIKLGLTDVFYSTGDYINMCNSDVSVDAMIHKTYIDVNEEYTEAAAATSVLVADCASTVTNEFCADHPFIYVIRHVDGKILFVGRYCSPTTN</sequence>
<proteinExistence type="inferred from homology"/>
<reference key="1">
    <citation type="journal article" date="2022" name="J. Infect. Dis.">
        <title>Exportation of Monkeypox virus from the African continent.</title>
        <authorList>
            <person name="Mauldin M.R."/>
            <person name="McCollum A.M."/>
            <person name="Nakazawa Y.J."/>
            <person name="Mandra A."/>
            <person name="Whitehouse E.R."/>
            <person name="Davidson W."/>
            <person name="Zhao H."/>
            <person name="Gao J."/>
            <person name="Li Y."/>
            <person name="Doty J."/>
            <person name="Yinka-Ogunleye A."/>
            <person name="Akinpelu A."/>
            <person name="Aruna O."/>
            <person name="Naidoo D."/>
            <person name="Lewandowski K."/>
            <person name="Afrough B."/>
            <person name="Graham V."/>
            <person name="Aarons E."/>
            <person name="Hewson R."/>
            <person name="Vipond R."/>
            <person name="Dunning J."/>
            <person name="Chand M."/>
            <person name="Brown C."/>
            <person name="Cohen-Gihon I."/>
            <person name="Erez N."/>
            <person name="Shifman O."/>
            <person name="Israeli O."/>
            <person name="Sharon M."/>
            <person name="Schwartz E."/>
            <person name="Beth-Din A."/>
            <person name="Zvi A."/>
            <person name="Mak T.M."/>
            <person name="Ng Y.K."/>
            <person name="Cui L."/>
            <person name="Lin R.T.P."/>
            <person name="Olson V.A."/>
            <person name="Brooks T."/>
            <person name="Paran N."/>
            <person name="Ihekweazu C."/>
            <person name="Reynolds M.G."/>
        </authorList>
    </citation>
    <scope>NUCLEOTIDE SEQUENCE [LARGE SCALE GENOMIC DNA]</scope>
    <source>
        <strain>MPXV-M5312_HM12_Rivers</strain>
    </source>
</reference>
<organismHost>
    <name type="scientific">Cynomys gunnisoni</name>
    <name type="common">Gunnison's prairie dog</name>
    <name type="synonym">Spermophilus gunnisoni</name>
    <dbReference type="NCBI Taxonomy" id="45479"/>
</organismHost>
<organismHost>
    <name type="scientific">Cynomys leucurus</name>
    <name type="common">White-tailed prairie dog</name>
    <dbReference type="NCBI Taxonomy" id="99825"/>
</organismHost>
<organismHost>
    <name type="scientific">Cynomys ludovicianus</name>
    <name type="common">Black-tailed prairie dog</name>
    <dbReference type="NCBI Taxonomy" id="45480"/>
</organismHost>
<organismHost>
    <name type="scientific">Cynomys mexicanus</name>
    <name type="common">Mexican prairie dog</name>
    <dbReference type="NCBI Taxonomy" id="99826"/>
</organismHost>
<organismHost>
    <name type="scientific">Cynomys parvidens</name>
    <name type="common">Utah prairie dog</name>
    <dbReference type="NCBI Taxonomy" id="99827"/>
</organismHost>
<organismHost>
    <name type="scientific">Gliridae</name>
    <name type="common">dormice</name>
    <dbReference type="NCBI Taxonomy" id="30650"/>
</organismHost>
<organismHost>
    <name type="scientific">Heliosciurus ruwenzorii</name>
    <name type="common">Ruwenzori sun squirrel</name>
    <dbReference type="NCBI Taxonomy" id="226685"/>
</organismHost>
<organismHost>
    <name type="scientific">Homo sapiens</name>
    <name type="common">Human</name>
    <dbReference type="NCBI Taxonomy" id="9606"/>
</organismHost>
<organismHost>
    <name type="scientific">Mus musculus</name>
    <name type="common">Mouse</name>
    <dbReference type="NCBI Taxonomy" id="10090"/>
</organismHost>
<accession>A0A7H0DNF9</accession>
<dbReference type="EMBL" id="MT903340">
    <property type="protein sequence ID" value="QNP13042.1"/>
    <property type="molecule type" value="Genomic_DNA"/>
</dbReference>
<dbReference type="RefSeq" id="YP_010377169.1">
    <property type="nucleotide sequence ID" value="NC_063383.1"/>
</dbReference>
<dbReference type="SMR" id="A0A7H0DNF9"/>
<dbReference type="GeneID" id="72551583"/>
<dbReference type="Proteomes" id="UP000516359">
    <property type="component" value="Genome"/>
</dbReference>
<dbReference type="GO" id="GO:0005615">
    <property type="term" value="C:extracellular space"/>
    <property type="evidence" value="ECO:0007669"/>
    <property type="project" value="InterPro"/>
</dbReference>
<dbReference type="GO" id="GO:0030430">
    <property type="term" value="C:host cell cytoplasm"/>
    <property type="evidence" value="ECO:0007669"/>
    <property type="project" value="UniProtKB-SubCell"/>
</dbReference>
<dbReference type="GO" id="GO:0004867">
    <property type="term" value="F:serine-type endopeptidase inhibitor activity"/>
    <property type="evidence" value="ECO:0007669"/>
    <property type="project" value="UniProtKB-KW"/>
</dbReference>
<dbReference type="CDD" id="cd19583">
    <property type="entry name" value="serpinN_SPI-1_SPI-2"/>
    <property type="match status" value="1"/>
</dbReference>
<dbReference type="FunFam" id="1.10.287.580:FF:000001">
    <property type="entry name" value="Serine proteinase inhibitor 2"/>
    <property type="match status" value="1"/>
</dbReference>
<dbReference type="Gene3D" id="2.30.39.10">
    <property type="entry name" value="Alpha-1-antitrypsin, domain 1"/>
    <property type="match status" value="1"/>
</dbReference>
<dbReference type="Gene3D" id="3.30.497.10">
    <property type="entry name" value="Antithrombin, subunit I, domain 2"/>
    <property type="match status" value="1"/>
</dbReference>
<dbReference type="Gene3D" id="1.10.287.580">
    <property type="entry name" value="Helix hairpin bin"/>
    <property type="match status" value="1"/>
</dbReference>
<dbReference type="InterPro" id="IPR023795">
    <property type="entry name" value="Serpin_CS"/>
</dbReference>
<dbReference type="InterPro" id="IPR023796">
    <property type="entry name" value="Serpin_dom"/>
</dbReference>
<dbReference type="InterPro" id="IPR000215">
    <property type="entry name" value="Serpin_fam"/>
</dbReference>
<dbReference type="InterPro" id="IPR036186">
    <property type="entry name" value="Serpin_sf"/>
</dbReference>
<dbReference type="InterPro" id="IPR042178">
    <property type="entry name" value="Serpin_sf_1"/>
</dbReference>
<dbReference type="InterPro" id="IPR042185">
    <property type="entry name" value="Serpin_sf_2"/>
</dbReference>
<dbReference type="PANTHER" id="PTHR11461:SF211">
    <property type="entry name" value="GH10112P-RELATED"/>
    <property type="match status" value="1"/>
</dbReference>
<dbReference type="PANTHER" id="PTHR11461">
    <property type="entry name" value="SERINE PROTEASE INHIBITOR, SERPIN"/>
    <property type="match status" value="1"/>
</dbReference>
<dbReference type="Pfam" id="PF00079">
    <property type="entry name" value="Serpin"/>
    <property type="match status" value="1"/>
</dbReference>
<dbReference type="SMART" id="SM00093">
    <property type="entry name" value="SERPIN"/>
    <property type="match status" value="1"/>
</dbReference>
<dbReference type="SUPFAM" id="SSF56574">
    <property type="entry name" value="Serpins"/>
    <property type="match status" value="1"/>
</dbReference>
<dbReference type="PROSITE" id="PS00284">
    <property type="entry name" value="SERPIN"/>
    <property type="match status" value="1"/>
</dbReference>
<protein>
    <recommendedName>
        <fullName>Serine proteinase inhibitor 2</fullName>
        <shortName>Serp-2</shortName>
        <shortName>Serpin-2</shortName>
    </recommendedName>
</protein>
<organism>
    <name type="scientific">Monkeypox virus</name>
    <dbReference type="NCBI Taxonomy" id="10244"/>
    <lineage>
        <taxon>Viruses</taxon>
        <taxon>Varidnaviria</taxon>
        <taxon>Bamfordvirae</taxon>
        <taxon>Nucleocytoviricota</taxon>
        <taxon>Pokkesviricetes</taxon>
        <taxon>Chitovirales</taxon>
        <taxon>Poxviridae</taxon>
        <taxon>Chordopoxvirinae</taxon>
        <taxon>Orthopoxvirus</taxon>
    </lineage>
</organism>
<keyword id="KW-1035">Host cytoplasm</keyword>
<keyword id="KW-0646">Protease inhibitor</keyword>
<keyword id="KW-1185">Reference proteome</keyword>
<keyword id="KW-0722">Serine protease inhibitor</keyword>
<feature type="chain" id="PRO_0000457616" description="Serine proteinase inhibitor 2">
    <location>
        <begin position="1"/>
        <end position="344"/>
    </location>
</feature>
<feature type="site" description="Reactive bond" evidence="1">
    <location>
        <begin position="306"/>
        <end position="307"/>
    </location>
</feature>
<name>SPI2_MONPV</name>
<comment type="function">
    <text evidence="2 3">Viral serpin that inhibits both cysteine and serine proteinases involved in the regulation of host inflammatory and apoptosis processes. Major anti-apoptotic protein which inhibits both intrinsic and extrinsic pathways and strongly cleaves host CASP1 and CASP8 but is a rather poor inhibitor of host CASP3. Prevents the proteolytic activity of host interleukin-1-beta converting enzyme (ICE) and ICE-like enzymes. Can also block apoptosis through host tumor necrosis factor (TNF) receptor (By similarity). The inhibition of host ICE is an example of a 'cross-class' interaction, in which a serpin inhibits a non-serine proteinase. Also inhibits granzyme B (By similarity).</text>
</comment>
<comment type="subcellular location">
    <subcellularLocation>
        <location evidence="3">Host cytoplasm</location>
    </subcellularLocation>
</comment>
<comment type="induction">
    <text evidence="4">Expressed in the early phase of the viral replicative cycle.</text>
</comment>
<comment type="similarity">
    <text evidence="4">Belongs to the serpin family. Poxviruses subfamily.</text>
</comment>
<gene>
    <name type="primary">OPG199</name>
    <name type="synonym">SPI-2</name>
    <name type="ORF">MPXVgp173</name>
</gene>
<evidence type="ECO:0000250" key="1"/>
<evidence type="ECO:0000250" key="2">
    <source>
        <dbReference type="UniProtKB" id="P07385"/>
    </source>
</evidence>
<evidence type="ECO:0000250" key="3">
    <source>
        <dbReference type="UniProtKB" id="P15059"/>
    </source>
</evidence>
<evidence type="ECO:0000305" key="4"/>